<reference key="1">
    <citation type="journal article" date="2002" name="Plant Physiol.">
        <title>Arabidopsis contains nine long-chain acyl-coenzyme A synthetase genes that participate in fatty acid and glycerolipid metabolism.</title>
        <authorList>
            <person name="Shockey J.M."/>
            <person name="Fulda M.S."/>
            <person name="Browse J.A."/>
        </authorList>
    </citation>
    <scope>NUCLEOTIDE SEQUENCE [MRNA]</scope>
    <scope>FUNCTION</scope>
    <scope>CATALYTIC ACTIVITY</scope>
    <scope>TISSUE SPECIFICITY</scope>
    <scope>GENE FAMILY</scope>
</reference>
<reference key="2">
    <citation type="journal article" date="2002" name="Plant Physiol.">
        <title>Molecular characterization of an Arabidopsis acyl-coenzyme A synthetase localized on glyoxysomal membranes.</title>
        <authorList>
            <person name="Hayashi H."/>
            <person name="De Bellis L."/>
            <person name="Hayashi Y."/>
            <person name="Nito K."/>
            <person name="Kato A."/>
            <person name="Hayashi M."/>
            <person name="Hara-Nishimura I."/>
            <person name="Nishimura M."/>
        </authorList>
    </citation>
    <scope>NUCLEOTIDE SEQUENCE [MRNA]</scope>
    <scope>PROTEIN SEQUENCE OF 39-60</scope>
    <scope>FUNCTION</scope>
    <scope>SUBCELLULAR LOCATION</scope>
</reference>
<reference key="3">
    <citation type="journal article" date="2000" name="Nature">
        <title>Sequence and analysis of chromosome 3 of the plant Arabidopsis thaliana.</title>
        <authorList>
            <person name="Salanoubat M."/>
            <person name="Lemcke K."/>
            <person name="Rieger M."/>
            <person name="Ansorge W."/>
            <person name="Unseld M."/>
            <person name="Fartmann B."/>
            <person name="Valle G."/>
            <person name="Bloecker H."/>
            <person name="Perez-Alonso M."/>
            <person name="Obermaier B."/>
            <person name="Delseny M."/>
            <person name="Boutry M."/>
            <person name="Grivell L.A."/>
            <person name="Mache R."/>
            <person name="Puigdomenech P."/>
            <person name="De Simone V."/>
            <person name="Choisne N."/>
            <person name="Artiguenave F."/>
            <person name="Robert C."/>
            <person name="Brottier P."/>
            <person name="Wincker P."/>
            <person name="Cattolico L."/>
            <person name="Weissenbach J."/>
            <person name="Saurin W."/>
            <person name="Quetier F."/>
            <person name="Schaefer M."/>
            <person name="Mueller-Auer S."/>
            <person name="Gabel C."/>
            <person name="Fuchs M."/>
            <person name="Benes V."/>
            <person name="Wurmbach E."/>
            <person name="Drzonek H."/>
            <person name="Erfle H."/>
            <person name="Jordan N."/>
            <person name="Bangert S."/>
            <person name="Wiedelmann R."/>
            <person name="Kranz H."/>
            <person name="Voss H."/>
            <person name="Holland R."/>
            <person name="Brandt P."/>
            <person name="Nyakatura G."/>
            <person name="Vezzi A."/>
            <person name="D'Angelo M."/>
            <person name="Pallavicini A."/>
            <person name="Toppo S."/>
            <person name="Simionati B."/>
            <person name="Conrad A."/>
            <person name="Hornischer K."/>
            <person name="Kauer G."/>
            <person name="Loehnert T.-H."/>
            <person name="Nordsiek G."/>
            <person name="Reichelt J."/>
            <person name="Scharfe M."/>
            <person name="Schoen O."/>
            <person name="Bargues M."/>
            <person name="Terol J."/>
            <person name="Climent J."/>
            <person name="Navarro P."/>
            <person name="Collado C."/>
            <person name="Perez-Perez A."/>
            <person name="Ottenwaelder B."/>
            <person name="Duchemin D."/>
            <person name="Cooke R."/>
            <person name="Laudie M."/>
            <person name="Berger-Llauro C."/>
            <person name="Purnelle B."/>
            <person name="Masuy D."/>
            <person name="de Haan M."/>
            <person name="Maarse A.C."/>
            <person name="Alcaraz J.-P."/>
            <person name="Cottet A."/>
            <person name="Casacuberta E."/>
            <person name="Monfort A."/>
            <person name="Argiriou A."/>
            <person name="Flores M."/>
            <person name="Liguori R."/>
            <person name="Vitale D."/>
            <person name="Mannhaupt G."/>
            <person name="Haase D."/>
            <person name="Schoof H."/>
            <person name="Rudd S."/>
            <person name="Zaccaria P."/>
            <person name="Mewes H.-W."/>
            <person name="Mayer K.F.X."/>
            <person name="Kaul S."/>
            <person name="Town C.D."/>
            <person name="Koo H.L."/>
            <person name="Tallon L.J."/>
            <person name="Jenkins J."/>
            <person name="Rooney T."/>
            <person name="Rizzo M."/>
            <person name="Walts A."/>
            <person name="Utterback T."/>
            <person name="Fujii C.Y."/>
            <person name="Shea T.P."/>
            <person name="Creasy T.H."/>
            <person name="Haas B."/>
            <person name="Maiti R."/>
            <person name="Wu D."/>
            <person name="Peterson J."/>
            <person name="Van Aken S."/>
            <person name="Pai G."/>
            <person name="Militscher J."/>
            <person name="Sellers P."/>
            <person name="Gill J.E."/>
            <person name="Feldblyum T.V."/>
            <person name="Preuss D."/>
            <person name="Lin X."/>
            <person name="Nierman W.C."/>
            <person name="Salzberg S.L."/>
            <person name="White O."/>
            <person name="Venter J.C."/>
            <person name="Fraser C.M."/>
            <person name="Kaneko T."/>
            <person name="Nakamura Y."/>
            <person name="Sato S."/>
            <person name="Kato T."/>
            <person name="Asamizu E."/>
            <person name="Sasamoto S."/>
            <person name="Kimura T."/>
            <person name="Idesawa K."/>
            <person name="Kawashima K."/>
            <person name="Kishida Y."/>
            <person name="Kiyokawa C."/>
            <person name="Kohara M."/>
            <person name="Matsumoto M."/>
            <person name="Matsuno A."/>
            <person name="Muraki A."/>
            <person name="Nakayama S."/>
            <person name="Nakazaki N."/>
            <person name="Shinpo S."/>
            <person name="Takeuchi C."/>
            <person name="Wada T."/>
            <person name="Watanabe A."/>
            <person name="Yamada M."/>
            <person name="Yasuda M."/>
            <person name="Tabata S."/>
        </authorList>
    </citation>
    <scope>NUCLEOTIDE SEQUENCE [LARGE SCALE GENOMIC DNA]</scope>
    <source>
        <strain>cv. Columbia</strain>
    </source>
</reference>
<reference key="4">
    <citation type="journal article" date="2017" name="Plant J.">
        <title>Araport11: a complete reannotation of the Arabidopsis thaliana reference genome.</title>
        <authorList>
            <person name="Cheng C.Y."/>
            <person name="Krishnakumar V."/>
            <person name="Chan A.P."/>
            <person name="Thibaud-Nissen F."/>
            <person name="Schobel S."/>
            <person name="Town C.D."/>
        </authorList>
    </citation>
    <scope>GENOME REANNOTATION</scope>
    <source>
        <strain>cv. Columbia</strain>
    </source>
</reference>
<reference key="5">
    <citation type="journal article" date="2003" name="Science">
        <title>Empirical analysis of transcriptional activity in the Arabidopsis genome.</title>
        <authorList>
            <person name="Yamada K."/>
            <person name="Lim J."/>
            <person name="Dale J.M."/>
            <person name="Chen H."/>
            <person name="Shinn P."/>
            <person name="Palm C.J."/>
            <person name="Southwick A.M."/>
            <person name="Wu H.C."/>
            <person name="Kim C.J."/>
            <person name="Nguyen M."/>
            <person name="Pham P.K."/>
            <person name="Cheuk R.F."/>
            <person name="Karlin-Newmann G."/>
            <person name="Liu S.X."/>
            <person name="Lam B."/>
            <person name="Sakano H."/>
            <person name="Wu T."/>
            <person name="Yu G."/>
            <person name="Miranda M."/>
            <person name="Quach H.L."/>
            <person name="Tripp M."/>
            <person name="Chang C.H."/>
            <person name="Lee J.M."/>
            <person name="Toriumi M.J."/>
            <person name="Chan M.M."/>
            <person name="Tang C.C."/>
            <person name="Onodera C.S."/>
            <person name="Deng J.M."/>
            <person name="Akiyama K."/>
            <person name="Ansari Y."/>
            <person name="Arakawa T."/>
            <person name="Banh J."/>
            <person name="Banno F."/>
            <person name="Bowser L."/>
            <person name="Brooks S.Y."/>
            <person name="Carninci P."/>
            <person name="Chao Q."/>
            <person name="Choy N."/>
            <person name="Enju A."/>
            <person name="Goldsmith A.D."/>
            <person name="Gurjal M."/>
            <person name="Hansen N.F."/>
            <person name="Hayashizaki Y."/>
            <person name="Johnson-Hopson C."/>
            <person name="Hsuan V.W."/>
            <person name="Iida K."/>
            <person name="Karnes M."/>
            <person name="Khan S."/>
            <person name="Koesema E."/>
            <person name="Ishida J."/>
            <person name="Jiang P.X."/>
            <person name="Jones T."/>
            <person name="Kawai J."/>
            <person name="Kamiya A."/>
            <person name="Meyers C."/>
            <person name="Nakajima M."/>
            <person name="Narusaka M."/>
            <person name="Seki M."/>
            <person name="Sakurai T."/>
            <person name="Satou M."/>
            <person name="Tamse R."/>
            <person name="Vaysberg M."/>
            <person name="Wallender E.K."/>
            <person name="Wong C."/>
            <person name="Yamamura Y."/>
            <person name="Yuan S."/>
            <person name="Shinozaki K."/>
            <person name="Davis R.W."/>
            <person name="Theologis A."/>
            <person name="Ecker J.R."/>
        </authorList>
    </citation>
    <scope>NUCLEOTIDE SEQUENCE [LARGE SCALE MRNA]</scope>
    <source>
        <strain>cv. Columbia</strain>
    </source>
</reference>
<reference key="6">
    <citation type="journal article" date="2002" name="Plant J.">
        <title>Two long-chain acyl-CoA synthetases from Arabidopsis thaliana involved in peroxisomal fatty acid beta-oxidation.</title>
        <authorList>
            <person name="Fulda M."/>
            <person name="Shockey J."/>
            <person name="Werber M."/>
            <person name="Wolter F.P."/>
            <person name="Heinz E."/>
        </authorList>
    </citation>
    <scope>FUNCTION</scope>
    <scope>CATALYTIC ACTIVITY</scope>
    <scope>SUBCELLULAR LOCATION</scope>
    <scope>DEVELOPMENTAL STAGE</scope>
</reference>
<reference key="7">
    <citation type="journal article" date="2003" name="Plant Physiol.">
        <title>Arabidopsis contains a large superfamily of acyl-activating enzymes. Phylogenetic and biochemical analysis reveals a new class of acyl-coenzyme a synthetases.</title>
        <authorList>
            <person name="Shockey J.M."/>
            <person name="Fulda M.S."/>
            <person name="Browse J."/>
        </authorList>
    </citation>
    <scope>GENE FAMILY ORGANIZATION</scope>
</reference>
<reference key="8">
    <citation type="journal article" date="2004" name="Plant Cell">
        <title>Peroxisomal Acyl-CoA synthetase activity is essential for seedling development in Arabidopsis thaliana.</title>
        <authorList>
            <person name="Fulda M."/>
            <person name="Schnurr J."/>
            <person name="Abbadi A."/>
            <person name="Heinz E."/>
            <person name="Browse J."/>
        </authorList>
    </citation>
    <scope>FUNCTION</scope>
    <scope>DISRUPTION PHENOTYPE</scope>
</reference>
<reference key="9">
    <citation type="journal article" date="2005" name="Arch. Biochem. Biophys.">
        <title>AtLACS7 interacts with the TPR domains of the PTS1 receptor PEX5.</title>
        <authorList>
            <person name="Bonsegna S."/>
            <person name="Slocombe S.P."/>
            <person name="De Bellis L."/>
            <person name="Baker A."/>
        </authorList>
    </citation>
    <scope>TISSUE SPECIFICITY</scope>
    <scope>INDUCTION</scope>
</reference>
<reference key="10">
    <citation type="journal article" date="2006" name="J. Exp. Bot.">
        <title>Analysis of the role of COMATOSE and peroxisomal beta-oxidation in the determination of germination potential in Arabidopsis.</title>
        <authorList>
            <person name="Footitt S."/>
            <person name="Marquez J."/>
            <person name="Schmuths H."/>
            <person name="Baker A."/>
            <person name="Theodoulou F.L."/>
            <person name="Holdsworth M."/>
        </authorList>
    </citation>
    <scope>FUNCTION</scope>
</reference>
<comment type="function">
    <text evidence="3 4 5 6 8 12 13">Activation of long-chain fatty acids for both synthesis of cellular lipids, and degradation via beta-oxidation (Probable). Preferentially uses palmitate, palmitoleate, oleate, linoleate and eicosenoate as substrates (PubMed:12177484, PubMed:12366803). Can use myristate and linolenate as substrates (PubMed:12366803). May play a regulatory role both in fatty acid import into glyoxysomes and in fatty acid beta-oxidation (PubMed:12481085). Functions redundantly with LACS7 in lipid mobilization for beta-oxidation during seed germination, which is essential for postgerminative growth and seedling establishment (PubMed:14742880, PubMed:16844736).</text>
</comment>
<comment type="catalytic activity">
    <reaction evidence="3 4">
        <text>a long-chain fatty acid + ATP + CoA = a long-chain fatty acyl-CoA + AMP + diphosphate</text>
        <dbReference type="Rhea" id="RHEA:15421"/>
        <dbReference type="ChEBI" id="CHEBI:30616"/>
        <dbReference type="ChEBI" id="CHEBI:33019"/>
        <dbReference type="ChEBI" id="CHEBI:57287"/>
        <dbReference type="ChEBI" id="CHEBI:57560"/>
        <dbReference type="ChEBI" id="CHEBI:83139"/>
        <dbReference type="ChEBI" id="CHEBI:456215"/>
        <dbReference type="EC" id="6.2.1.3"/>
    </reaction>
    <physiologicalReaction direction="left-to-right" evidence="3 4">
        <dbReference type="Rhea" id="RHEA:15422"/>
    </physiologicalReaction>
</comment>
<comment type="catalytic activity">
    <reaction evidence="4">
        <text>tetradecanoate + ATP + CoA = tetradecanoyl-CoA + AMP + diphosphate</text>
        <dbReference type="Rhea" id="RHEA:33619"/>
        <dbReference type="ChEBI" id="CHEBI:30616"/>
        <dbReference type="ChEBI" id="CHEBI:30807"/>
        <dbReference type="ChEBI" id="CHEBI:33019"/>
        <dbReference type="ChEBI" id="CHEBI:57287"/>
        <dbReference type="ChEBI" id="CHEBI:57385"/>
        <dbReference type="ChEBI" id="CHEBI:456215"/>
    </reaction>
    <physiologicalReaction direction="left-to-right" evidence="4">
        <dbReference type="Rhea" id="RHEA:33620"/>
    </physiologicalReaction>
</comment>
<comment type="catalytic activity">
    <reaction evidence="4">
        <text>hexadecanoate + ATP + CoA = hexadecanoyl-CoA + AMP + diphosphate</text>
        <dbReference type="Rhea" id="RHEA:30751"/>
        <dbReference type="ChEBI" id="CHEBI:7896"/>
        <dbReference type="ChEBI" id="CHEBI:30616"/>
        <dbReference type="ChEBI" id="CHEBI:33019"/>
        <dbReference type="ChEBI" id="CHEBI:57287"/>
        <dbReference type="ChEBI" id="CHEBI:57379"/>
        <dbReference type="ChEBI" id="CHEBI:456215"/>
    </reaction>
    <physiologicalReaction direction="left-to-right" evidence="4">
        <dbReference type="Rhea" id="RHEA:30752"/>
    </physiologicalReaction>
</comment>
<comment type="catalytic activity">
    <reaction evidence="4">
        <text>(9Z)-octadecenoate + ATP + CoA = (9Z)-octadecenoyl-CoA + AMP + diphosphate</text>
        <dbReference type="Rhea" id="RHEA:33607"/>
        <dbReference type="ChEBI" id="CHEBI:30616"/>
        <dbReference type="ChEBI" id="CHEBI:30823"/>
        <dbReference type="ChEBI" id="CHEBI:33019"/>
        <dbReference type="ChEBI" id="CHEBI:57287"/>
        <dbReference type="ChEBI" id="CHEBI:57387"/>
        <dbReference type="ChEBI" id="CHEBI:456215"/>
    </reaction>
    <physiologicalReaction direction="left-to-right" evidence="4">
        <dbReference type="Rhea" id="RHEA:33608"/>
    </physiologicalReaction>
</comment>
<comment type="catalytic activity">
    <reaction evidence="4">
        <text>(9Z,12Z)-octadecadienoate + ATP + CoA = (9Z,12Z)-octadecadienoyl-CoA + AMP + diphosphate</text>
        <dbReference type="Rhea" id="RHEA:33651"/>
        <dbReference type="ChEBI" id="CHEBI:30245"/>
        <dbReference type="ChEBI" id="CHEBI:30616"/>
        <dbReference type="ChEBI" id="CHEBI:33019"/>
        <dbReference type="ChEBI" id="CHEBI:57287"/>
        <dbReference type="ChEBI" id="CHEBI:57383"/>
        <dbReference type="ChEBI" id="CHEBI:456215"/>
    </reaction>
    <physiologicalReaction direction="left-to-right" evidence="4">
        <dbReference type="Rhea" id="RHEA:33652"/>
    </physiologicalReaction>
</comment>
<comment type="catalytic activity">
    <reaction evidence="4">
        <text>(9Z,12Z,15Z)-octadecatrienoate + ATP + CoA = (9Z,12Z,15Z)-octadecatrienoyl-CoA + AMP + diphosphate</text>
        <dbReference type="Rhea" id="RHEA:44936"/>
        <dbReference type="ChEBI" id="CHEBI:30616"/>
        <dbReference type="ChEBI" id="CHEBI:32387"/>
        <dbReference type="ChEBI" id="CHEBI:33019"/>
        <dbReference type="ChEBI" id="CHEBI:57287"/>
        <dbReference type="ChEBI" id="CHEBI:74034"/>
        <dbReference type="ChEBI" id="CHEBI:456215"/>
    </reaction>
    <physiologicalReaction direction="left-to-right" evidence="4">
        <dbReference type="Rhea" id="RHEA:44937"/>
    </physiologicalReaction>
</comment>
<comment type="cofactor">
    <cofactor evidence="1">
        <name>Mg(2+)</name>
        <dbReference type="ChEBI" id="CHEBI:18420"/>
    </cofactor>
</comment>
<comment type="pathway">
    <text evidence="11">Lipid metabolism; fatty acid metabolism.</text>
</comment>
<comment type="subcellular location">
    <subcellularLocation>
        <location evidence="4 5">Peroxisome</location>
    </subcellularLocation>
    <subcellularLocation>
        <location evidence="5">Glyoxysome membrane</location>
        <topology evidence="11">Peripheral membrane protein</topology>
    </subcellularLocation>
</comment>
<comment type="tissue specificity">
    <text evidence="3 7">Expressed in roots, stems, leaves flowers and germinating seedling (PubMed:12177484). Preferentially expressed in seeds and senescent leaves.</text>
</comment>
<comment type="developmental stage">
    <text evidence="4">Induced during seed germination.</text>
</comment>
<comment type="induction">
    <text evidence="7">Up-regulated by ozone.</text>
</comment>
<comment type="disruption phenotype">
    <text evidence="6">Seedlings of the lacs6 and lacs7 double mutant were arrested in postgerminative growth due to inability to mobilize fatty acids for beta-oxidation, a necessary process to pursue the development.</text>
</comment>
<comment type="similarity">
    <text evidence="11">Belongs to the ATP-dependent AMP-binding enzyme family.</text>
</comment>
<comment type="sequence caution" evidence="11">
    <conflict type="erroneous gene model prediction">
        <sequence resource="EMBL-CDS" id="AAF23219"/>
    </conflict>
</comment>
<name>LACS6_ARATH</name>
<sequence length="701" mass="76603">MDSSSSSSSAAARRRINAIHSHLVTSSRSSPLLRSNPTAGEFCLDNGYSVVLPEKLNTGSWNVYRSAKSPFKLVSRFPDHPDIATLHDNFEHAVHDFRDYKYLGTRVRVDGTVGDYKWMTYGEAGTARTALGSGLVHHGIPMGSSVGIYFINRPEWLIVDHACSSYSYVSVPLYDTLGPDAVKFIVNHATVQAIFCVAETLNSLLSCLSEMPSVRLVVVVGGLIESLPSLPSSSGVKVVSYSVLLNQGRSNPQRFFPPKPDDVATICYTSGTTGTPKGVVLTHANLIANVAGSSFSVKFFSSDVYISYLPLAHIYERANQILTVYFGVAVGFYQGDNMKLLDDLAALRPTVFSSVPRLYNRIYAGIINAVKTSGGLKERLFNAAYNAKKQALLNGKSASPIWDRLVFNKIKDRLGGRVRFMTSGASPLSPEVMEFLKVCFGGRVTEGYGMTETSCVISGMDEGDNLTGHVGSPNPACEVKLVDVPEMNYTSADQPHPRGEICVRGPIIFTGYYKDEIQTKEVIDEDGWLHTGDIGLWLPGGRLKIIDRKKNIFKLAQGEYIAPEKIENVYAKCKFVGQCFIYGDSFNSSLVAVVSVDPDVLKSWAASEGIKGGDLRELCNNPRVKAAVLSDMDTVGREAQLRGFEFAKAVTLVLEPFTLENGLLTPTFKIKRPQAKEYFAEAITNMYKELGASDPSANRGL</sequence>
<protein>
    <recommendedName>
        <fullName evidence="9">Long chain acyl-CoA synthetase 6, peroxisomal</fullName>
        <shortName evidence="10">AtLACS6</shortName>
        <ecNumber evidence="3 4">6.2.1.3</ecNumber>
    </recommendedName>
</protein>
<gene>
    <name evidence="9" type="primary">LACS6</name>
    <name evidence="16" type="ordered locus">At3g05970</name>
    <name evidence="15" type="ORF">F2O10.7</name>
</gene>
<proteinExistence type="evidence at protein level"/>
<accession>Q8LPS1</accession>
<accession>Q8LKS6</accession>
<accession>Q9C5U7</accession>
<accession>Q9SFG1</accession>
<feature type="propeptide" id="PRO_0000401414" description="Removed in mature form" evidence="5">
    <location>
        <begin position="1"/>
        <end position="38"/>
    </location>
</feature>
<feature type="chain" id="PRO_0000401415" description="Long chain acyl-CoA synthetase 6, peroxisomal">
    <location>
        <begin position="39"/>
        <end position="701"/>
    </location>
</feature>
<feature type="region of interest" description="Fatty acid-binding" evidence="2">
    <location>
        <begin position="526"/>
        <end position="550"/>
    </location>
</feature>
<feature type="short sequence motif" description="Microbody targeting signal" evidence="14">
    <location>
        <begin position="15"/>
        <end position="23"/>
    </location>
</feature>
<feature type="binding site" evidence="2">
    <location>
        <begin position="266"/>
        <end position="277"/>
    </location>
    <ligand>
        <name>ATP</name>
        <dbReference type="ChEBI" id="CHEBI:30616"/>
    </ligand>
</feature>
<feature type="sequence conflict" description="In Ref. 2; BAB40450." evidence="11" ref="2">
    <original>S</original>
    <variation>N</variation>
    <location>
        <position position="60"/>
    </location>
</feature>
<feature type="sequence conflict" description="In Ref. 1; AAM28873." evidence="11" ref="1">
    <original>G</original>
    <variation>V</variation>
    <location>
        <position position="139"/>
    </location>
</feature>
<feature type="sequence conflict" description="In Ref. 2; BAB40450." evidence="11" ref="2">
    <original>I</original>
    <variation>N</variation>
    <location>
        <position position="224"/>
    </location>
</feature>
<feature type="sequence conflict" description="In Ref. 1; AAM28873." evidence="11" ref="1">
    <original>V</original>
    <variation>I</variation>
    <location>
        <position position="479"/>
    </location>
</feature>
<feature type="sequence conflict" description="In Ref. 2; BAB40450." evidence="11" ref="2">
    <original>I</original>
    <variation>V</variation>
    <location>
        <position position="517"/>
    </location>
</feature>
<dbReference type="EC" id="6.2.1.3" evidence="3 4"/>
<dbReference type="EMBL" id="AF503756">
    <property type="protein sequence ID" value="AAM28873.1"/>
    <property type="molecule type" value="mRNA"/>
</dbReference>
<dbReference type="EMBL" id="AB030317">
    <property type="protein sequence ID" value="BAB40450.1"/>
    <property type="molecule type" value="mRNA"/>
</dbReference>
<dbReference type="EMBL" id="AC013454">
    <property type="protein sequence ID" value="AAF23219.1"/>
    <property type="status" value="ALT_SEQ"/>
    <property type="molecule type" value="Genomic_DNA"/>
</dbReference>
<dbReference type="EMBL" id="CP002686">
    <property type="protein sequence ID" value="AEE74324.1"/>
    <property type="molecule type" value="Genomic_DNA"/>
</dbReference>
<dbReference type="EMBL" id="AY094418">
    <property type="protein sequence ID" value="AAM19792.1"/>
    <property type="molecule type" value="mRNA"/>
</dbReference>
<dbReference type="EMBL" id="BT001117">
    <property type="protein sequence ID" value="AAN64508.1"/>
    <property type="molecule type" value="mRNA"/>
</dbReference>
<dbReference type="RefSeq" id="NP_566265.1">
    <property type="nucleotide sequence ID" value="NM_111471.3"/>
</dbReference>
<dbReference type="SMR" id="Q8LPS1"/>
<dbReference type="BioGRID" id="5102">
    <property type="interactions" value="2"/>
</dbReference>
<dbReference type="FunCoup" id="Q8LPS1">
    <property type="interactions" value="2064"/>
</dbReference>
<dbReference type="STRING" id="3702.Q8LPS1"/>
<dbReference type="SwissLipids" id="SLP:000001941"/>
<dbReference type="iPTMnet" id="Q8LPS1"/>
<dbReference type="PaxDb" id="3702-AT3G05970.1"/>
<dbReference type="ProteomicsDB" id="238554"/>
<dbReference type="EnsemblPlants" id="AT3G05970.1">
    <property type="protein sequence ID" value="AT3G05970.1"/>
    <property type="gene ID" value="AT3G05970"/>
</dbReference>
<dbReference type="GeneID" id="819767"/>
<dbReference type="Gramene" id="AT3G05970.1">
    <property type="protein sequence ID" value="AT3G05970.1"/>
    <property type="gene ID" value="AT3G05970"/>
</dbReference>
<dbReference type="KEGG" id="ath:AT3G05970"/>
<dbReference type="Araport" id="AT3G05970"/>
<dbReference type="TAIR" id="AT3G05970">
    <property type="gene designation" value="LACS6"/>
</dbReference>
<dbReference type="eggNOG" id="KOG1256">
    <property type="taxonomic scope" value="Eukaryota"/>
</dbReference>
<dbReference type="HOGENOM" id="CLU_000022_45_4_1"/>
<dbReference type="InParanoid" id="Q8LPS1"/>
<dbReference type="OMA" id="WYHSIGL"/>
<dbReference type="OrthoDB" id="1700726at2759"/>
<dbReference type="PhylomeDB" id="Q8LPS1"/>
<dbReference type="BioCyc" id="ARA:AT3G05970-MONOMER"/>
<dbReference type="BioCyc" id="MetaCyc:AT3G05970-MONOMER"/>
<dbReference type="UniPathway" id="UPA00199"/>
<dbReference type="CD-CODE" id="4299E36E">
    <property type="entry name" value="Nucleolus"/>
</dbReference>
<dbReference type="PRO" id="PR:Q8LPS1"/>
<dbReference type="Proteomes" id="UP000006548">
    <property type="component" value="Chromosome 3"/>
</dbReference>
<dbReference type="ExpressionAtlas" id="Q8LPS1">
    <property type="expression patterns" value="baseline and differential"/>
</dbReference>
<dbReference type="GO" id="GO:0005829">
    <property type="term" value="C:cytosol"/>
    <property type="evidence" value="ECO:0007005"/>
    <property type="project" value="TAIR"/>
</dbReference>
<dbReference type="GO" id="GO:0046861">
    <property type="term" value="C:glyoxysomal membrane"/>
    <property type="evidence" value="ECO:0007669"/>
    <property type="project" value="UniProtKB-SubCell"/>
</dbReference>
<dbReference type="GO" id="GO:0005777">
    <property type="term" value="C:peroxisome"/>
    <property type="evidence" value="ECO:0000314"/>
    <property type="project" value="UniProtKB"/>
</dbReference>
<dbReference type="GO" id="GO:0005524">
    <property type="term" value="F:ATP binding"/>
    <property type="evidence" value="ECO:0007669"/>
    <property type="project" value="UniProtKB-KW"/>
</dbReference>
<dbReference type="GO" id="GO:0004467">
    <property type="term" value="F:long-chain fatty acid-CoA ligase activity"/>
    <property type="evidence" value="ECO:0000314"/>
    <property type="project" value="UniProtKB"/>
</dbReference>
<dbReference type="GO" id="GO:0006631">
    <property type="term" value="P:fatty acid metabolic process"/>
    <property type="evidence" value="ECO:0000304"/>
    <property type="project" value="UniProtKB"/>
</dbReference>
<dbReference type="GO" id="GO:0010193">
    <property type="term" value="P:response to ozone"/>
    <property type="evidence" value="ECO:0000270"/>
    <property type="project" value="UniProtKB"/>
</dbReference>
<dbReference type="CDD" id="cd05927">
    <property type="entry name" value="LC-FACS_euk"/>
    <property type="match status" value="1"/>
</dbReference>
<dbReference type="Gene3D" id="3.40.50.12780">
    <property type="entry name" value="N-terminal domain of ligase-like"/>
    <property type="match status" value="1"/>
</dbReference>
<dbReference type="InterPro" id="IPR020845">
    <property type="entry name" value="AMP-binding_CS"/>
</dbReference>
<dbReference type="InterPro" id="IPR000873">
    <property type="entry name" value="AMP-dep_synth/lig_dom"/>
</dbReference>
<dbReference type="InterPro" id="IPR042099">
    <property type="entry name" value="ANL_N_sf"/>
</dbReference>
<dbReference type="InterPro" id="IPR045311">
    <property type="entry name" value="LC-FACS_euk"/>
</dbReference>
<dbReference type="PANTHER" id="PTHR43272:SF33">
    <property type="entry name" value="AMP-BINDING DOMAIN-CONTAINING PROTEIN-RELATED"/>
    <property type="match status" value="1"/>
</dbReference>
<dbReference type="PANTHER" id="PTHR43272">
    <property type="entry name" value="LONG-CHAIN-FATTY-ACID--COA LIGASE"/>
    <property type="match status" value="1"/>
</dbReference>
<dbReference type="Pfam" id="PF00501">
    <property type="entry name" value="AMP-binding"/>
    <property type="match status" value="1"/>
</dbReference>
<dbReference type="SUPFAM" id="SSF56801">
    <property type="entry name" value="Acetyl-CoA synthetase-like"/>
    <property type="match status" value="1"/>
</dbReference>
<dbReference type="PROSITE" id="PS00455">
    <property type="entry name" value="AMP_BINDING"/>
    <property type="match status" value="1"/>
</dbReference>
<keyword id="KW-0067">ATP-binding</keyword>
<keyword id="KW-0217">Developmental protein</keyword>
<keyword id="KW-0903">Direct protein sequencing</keyword>
<keyword id="KW-0276">Fatty acid metabolism</keyword>
<keyword id="KW-0330">Glyoxysome</keyword>
<keyword id="KW-0436">Ligase</keyword>
<keyword id="KW-0443">Lipid metabolism</keyword>
<keyword id="KW-0460">Magnesium</keyword>
<keyword id="KW-0472">Membrane</keyword>
<keyword id="KW-0547">Nucleotide-binding</keyword>
<keyword id="KW-0576">Peroxisome</keyword>
<keyword id="KW-1185">Reference proteome</keyword>
<organism>
    <name type="scientific">Arabidopsis thaliana</name>
    <name type="common">Mouse-ear cress</name>
    <dbReference type="NCBI Taxonomy" id="3702"/>
    <lineage>
        <taxon>Eukaryota</taxon>
        <taxon>Viridiplantae</taxon>
        <taxon>Streptophyta</taxon>
        <taxon>Embryophyta</taxon>
        <taxon>Tracheophyta</taxon>
        <taxon>Spermatophyta</taxon>
        <taxon>Magnoliopsida</taxon>
        <taxon>eudicotyledons</taxon>
        <taxon>Gunneridae</taxon>
        <taxon>Pentapetalae</taxon>
        <taxon>rosids</taxon>
        <taxon>malvids</taxon>
        <taxon>Brassicales</taxon>
        <taxon>Brassicaceae</taxon>
        <taxon>Camelineae</taxon>
        <taxon>Arabidopsis</taxon>
    </lineage>
</organism>
<evidence type="ECO:0000250" key="1">
    <source>
        <dbReference type="UniProtKB" id="P69451"/>
    </source>
</evidence>
<evidence type="ECO:0000255" key="2"/>
<evidence type="ECO:0000269" key="3">
    <source>
    </source>
</evidence>
<evidence type="ECO:0000269" key="4">
    <source>
    </source>
</evidence>
<evidence type="ECO:0000269" key="5">
    <source>
    </source>
</evidence>
<evidence type="ECO:0000269" key="6">
    <source>
    </source>
</evidence>
<evidence type="ECO:0000269" key="7">
    <source>
    </source>
</evidence>
<evidence type="ECO:0000269" key="8">
    <source>
    </source>
</evidence>
<evidence type="ECO:0000303" key="9">
    <source>
    </source>
</evidence>
<evidence type="ECO:0000303" key="10">
    <source>
    </source>
</evidence>
<evidence type="ECO:0000305" key="11"/>
<evidence type="ECO:0000305" key="12">
    <source>
    </source>
</evidence>
<evidence type="ECO:0000305" key="13">
    <source>
    </source>
</evidence>
<evidence type="ECO:0000305" key="14">
    <source>
    </source>
</evidence>
<evidence type="ECO:0000312" key="15">
    <source>
        <dbReference type="EMBL" id="AAF23219.1"/>
    </source>
</evidence>
<evidence type="ECO:0000312" key="16">
    <source>
        <dbReference type="EMBL" id="AEE74324.1"/>
    </source>
</evidence>